<proteinExistence type="inferred from homology"/>
<accession>Q7YN79</accession>
<keyword id="KW-0933">Apicoplast</keyword>
<keyword id="KW-0934">Plastid</keyword>
<keyword id="KW-0687">Ribonucleoprotein</keyword>
<keyword id="KW-0689">Ribosomal protein</keyword>
<geneLocation type="apicoplast"/>
<dbReference type="EMBL" id="AY217738">
    <property type="protein sequence ID" value="AAO40224.1"/>
    <property type="molecule type" value="Genomic_DNA"/>
</dbReference>
<dbReference type="RefSeq" id="NP_852623.1">
    <property type="nucleotide sequence ID" value="NC_004823.1"/>
</dbReference>
<dbReference type="SMR" id="Q7YN79"/>
<dbReference type="GeneID" id="1263679"/>
<dbReference type="VEuPathDB" id="ToxoDB:ETH2_API02300"/>
<dbReference type="GO" id="GO:0020011">
    <property type="term" value="C:apicoplast"/>
    <property type="evidence" value="ECO:0007669"/>
    <property type="project" value="UniProtKB-SubCell"/>
</dbReference>
<dbReference type="GO" id="GO:0005762">
    <property type="term" value="C:mitochondrial large ribosomal subunit"/>
    <property type="evidence" value="ECO:0007669"/>
    <property type="project" value="TreeGrafter"/>
</dbReference>
<dbReference type="GO" id="GO:0003723">
    <property type="term" value="F:RNA binding"/>
    <property type="evidence" value="ECO:0007669"/>
    <property type="project" value="InterPro"/>
</dbReference>
<dbReference type="GO" id="GO:0003735">
    <property type="term" value="F:structural constituent of ribosome"/>
    <property type="evidence" value="ECO:0007669"/>
    <property type="project" value="InterPro"/>
</dbReference>
<dbReference type="GO" id="GO:0016740">
    <property type="term" value="F:transferase activity"/>
    <property type="evidence" value="ECO:0007669"/>
    <property type="project" value="InterPro"/>
</dbReference>
<dbReference type="GO" id="GO:0032543">
    <property type="term" value="P:mitochondrial translation"/>
    <property type="evidence" value="ECO:0007669"/>
    <property type="project" value="TreeGrafter"/>
</dbReference>
<dbReference type="FunFam" id="4.10.950.10:FF:000001">
    <property type="entry name" value="50S ribosomal protein L2"/>
    <property type="match status" value="1"/>
</dbReference>
<dbReference type="Gene3D" id="2.30.30.30">
    <property type="match status" value="1"/>
</dbReference>
<dbReference type="Gene3D" id="4.10.950.10">
    <property type="entry name" value="Ribosomal protein L2, domain 3"/>
    <property type="match status" value="1"/>
</dbReference>
<dbReference type="InterPro" id="IPR014722">
    <property type="entry name" value="Rib_uL2_dom2"/>
</dbReference>
<dbReference type="InterPro" id="IPR002171">
    <property type="entry name" value="Ribosomal_uL2"/>
</dbReference>
<dbReference type="InterPro" id="IPR005880">
    <property type="entry name" value="Ribosomal_uL2_bac/org-type"/>
</dbReference>
<dbReference type="InterPro" id="IPR022669">
    <property type="entry name" value="Ribosomal_uL2_C"/>
</dbReference>
<dbReference type="InterPro" id="IPR022671">
    <property type="entry name" value="Ribosomal_uL2_CS"/>
</dbReference>
<dbReference type="InterPro" id="IPR014726">
    <property type="entry name" value="Ribosomal_uL2_dom3"/>
</dbReference>
<dbReference type="InterPro" id="IPR008991">
    <property type="entry name" value="Translation_prot_SH3-like_sf"/>
</dbReference>
<dbReference type="NCBIfam" id="TIGR01171">
    <property type="entry name" value="rplB_bact"/>
    <property type="match status" value="1"/>
</dbReference>
<dbReference type="PANTHER" id="PTHR13691:SF5">
    <property type="entry name" value="LARGE RIBOSOMAL SUBUNIT PROTEIN UL2M"/>
    <property type="match status" value="1"/>
</dbReference>
<dbReference type="PANTHER" id="PTHR13691">
    <property type="entry name" value="RIBOSOMAL PROTEIN L2"/>
    <property type="match status" value="1"/>
</dbReference>
<dbReference type="Pfam" id="PF03947">
    <property type="entry name" value="Ribosomal_L2_C"/>
    <property type="match status" value="1"/>
</dbReference>
<dbReference type="PIRSF" id="PIRSF002158">
    <property type="entry name" value="Ribosomal_L2"/>
    <property type="match status" value="1"/>
</dbReference>
<dbReference type="SMART" id="SM01382">
    <property type="entry name" value="Ribosomal_L2_C"/>
    <property type="match status" value="1"/>
</dbReference>
<dbReference type="SUPFAM" id="SSF50104">
    <property type="entry name" value="Translation proteins SH3-like domain"/>
    <property type="match status" value="1"/>
</dbReference>
<dbReference type="PROSITE" id="PS00467">
    <property type="entry name" value="RIBOSOMAL_L2"/>
    <property type="match status" value="1"/>
</dbReference>
<sequence>MYNMYYCKRNKYISNYSFGKNNKGHITIKHRQGLFIKSSQLKNTNYNYIFKKNIFNIINYNNKKIIKLQILKKIIDYKLQKYIYKVICLNNSLNYQYKYLPITKNTKEGDIIYIGETIELKIGNILPIKKIPCGSWIHNIEHNPTKGAVFVKNSKISAFLIYIGKKYVTIKLPSGEIRLLNKNVFCILGELNIIPLFLKKNKAGFNRLLGKRPKVRGVAMNACDHPHGGGEGKNSIGRSSVYSPWGTISKGIITRKSKKYSKKLILKNRKKND</sequence>
<feature type="chain" id="PRO_0000310089" description="Large ribosomal subunit protein uL2c">
    <location>
        <begin position="1"/>
        <end position="273"/>
    </location>
</feature>
<protein>
    <recommendedName>
        <fullName evidence="2">Large ribosomal subunit protein uL2c</fullName>
    </recommendedName>
    <alternativeName>
        <fullName evidence="3">50S ribosomal protein L2, apicoplast</fullName>
    </alternativeName>
</protein>
<reference key="1">
    <citation type="journal article" date="2003" name="Gene">
        <title>Apicoplast genome of the coccidian Eimeria tenella.</title>
        <authorList>
            <person name="Cai X."/>
            <person name="Fuller A.L."/>
            <person name="McDougald L.R."/>
            <person name="Zhu G."/>
        </authorList>
    </citation>
    <scope>NUCLEOTIDE SEQUENCE [LARGE SCALE GENOMIC DNA]</scope>
    <source>
        <strain>Penn State</strain>
    </source>
</reference>
<organism>
    <name type="scientific">Eimeria tenella</name>
    <name type="common">Coccidian parasite</name>
    <dbReference type="NCBI Taxonomy" id="5802"/>
    <lineage>
        <taxon>Eukaryota</taxon>
        <taxon>Sar</taxon>
        <taxon>Alveolata</taxon>
        <taxon>Apicomplexa</taxon>
        <taxon>Conoidasida</taxon>
        <taxon>Coccidia</taxon>
        <taxon>Eucoccidiorida</taxon>
        <taxon>Eimeriorina</taxon>
        <taxon>Eimeriidae</taxon>
        <taxon>Eimeria</taxon>
    </lineage>
</organism>
<comment type="subunit">
    <text evidence="1">Part of the 50S ribosomal subunit.</text>
</comment>
<comment type="subcellular location">
    <subcellularLocation>
        <location>Plastid</location>
        <location>Apicoplast</location>
    </subcellularLocation>
</comment>
<comment type="similarity">
    <text evidence="3">Belongs to the universal ribosomal protein uL2 family.</text>
</comment>
<gene>
    <name type="primary">rpl2</name>
</gene>
<name>RK2_EIMTE</name>
<evidence type="ECO:0000250" key="1"/>
<evidence type="ECO:0000255" key="2">
    <source>
        <dbReference type="HAMAP-Rule" id="MF_01320"/>
    </source>
</evidence>
<evidence type="ECO:0000305" key="3"/>